<keyword id="KW-0235">DNA replication</keyword>
<keyword id="KW-0238">DNA-binding</keyword>
<keyword id="KW-0239">DNA-directed DNA polymerase</keyword>
<keyword id="KW-0255">Endonuclease</keyword>
<keyword id="KW-0945">Host-virus interaction</keyword>
<keyword id="KW-0378">Hydrolase</keyword>
<keyword id="KW-1090">Inhibition of host innate immune response by virus</keyword>
<keyword id="KW-1113">Inhibition of host RLR pathway by virus</keyword>
<keyword id="KW-0460">Magnesium</keyword>
<keyword id="KW-0479">Metal-binding</keyword>
<keyword id="KW-0511">Multifunctional enzyme</keyword>
<keyword id="KW-0540">Nuclease</keyword>
<keyword id="KW-0548">Nucleotidyltransferase</keyword>
<keyword id="KW-0695">RNA-directed DNA polymerase</keyword>
<keyword id="KW-0808">Transferase</keyword>
<keyword id="KW-0899">Viral immunoevasion</keyword>
<gene>
    <name evidence="1" type="primary">P</name>
</gene>
<sequence>MPLSYQHFRKLLLLDDEAGPLEEELPRLADEGLNRRVAEDLNLGNLNVSIPWTHKVGNFTGLYSSTVPVFNPEWQTPSFPHIHLQEDIINRCQQYVGPLTVNEKRRLKLIMPARFYPNLTKYLPLDKGIKPYYPEHAVNHYFKTRHYLHTLWKAGILYKRETTRSASFCGSPYSWEQELQHGRLVFQTSTRHGDESFCSQSSGILSRSPVGPCVRSQLKQSRLGLQPQQGSMARGKSGRSGSIRARVHPTTRRSFGVEPSGSGHIDNSASSTSSCLHQSAVRKTAYSHLSTSKRQSSSGHAVEFHNIPPSSARSQSEGPIFSCWWLQFRNSKPCSDYCLTHIVNLLEDWGPCTEHGEHNIRIPRTPARVTGGVFLVDKNPHNTTESRLVVDFSQFSRGSTHVSWPKFAVPNLQSLTNLLSSNLSWLSLDVSAAFYHIPLHPAAMPHLLVGSSGLPRYVARLSSTSRNINHQHGAMQDLHDSCSRNLYVSLLLLYKTFGRKLHLYSHPIILGFRKIPMGVGLSPFLLAQFTSAICSVVRRAFPHCLAFSYMDDVVLGAKSVQHLESLFTSITNFLLSLGIHLNPNKTKRWGYSLNFMGYVIGSWGTLPQEHIVLKLKQCFRKLPVNSPIDWKVCQRIVGLLGFAAPFTQCGYPALMPLYACIQSKQAFTFSPTYKAFLCKQYLNLYPVARQRSGLCQVFADATPTGWGLAIGHRRMRGTFVAPLPIHTAELLAACFARSRSGAKLIGTDNSVVLSRKYTSFPWLLGCAANWILRGTSFVYVPSALNPADDPSRGRLGLYRPLLLLPFRPTTGRTSLYAVSPSVPSHLPDRVHFASPLHVAWRPP</sequence>
<organism>
    <name type="scientific">Hepatitis B virus genotype C subtype ad (isolate Japan/S-179/1988)</name>
    <name type="common">HBV-C</name>
    <dbReference type="NCBI Taxonomy" id="489468"/>
    <lineage>
        <taxon>Viruses</taxon>
        <taxon>Riboviria</taxon>
        <taxon>Pararnavirae</taxon>
        <taxon>Artverviricota</taxon>
        <taxon>Revtraviricetes</taxon>
        <taxon>Blubervirales</taxon>
        <taxon>Hepadnaviridae</taxon>
        <taxon>Orthohepadnavirus</taxon>
        <taxon>Hepatitis B virus</taxon>
        <taxon>hepatitis B virus genotype C</taxon>
    </lineage>
</organism>
<protein>
    <recommendedName>
        <fullName evidence="1">Protein P</fullName>
    </recommendedName>
    <domain>
        <recommendedName>
            <fullName evidence="1">DNA-directed DNA polymerase</fullName>
            <ecNumber evidence="1">2.7.7.7</ecNumber>
        </recommendedName>
    </domain>
    <domain>
        <recommendedName>
            <fullName evidence="1">RNA-directed DNA polymerase</fullName>
            <ecNumber evidence="1">2.7.7.49</ecNumber>
        </recommendedName>
    </domain>
    <domain>
        <recommendedName>
            <fullName evidence="1">Ribonuclease H</fullName>
            <ecNumber evidence="1">3.1.26.4</ecNumber>
        </recommendedName>
    </domain>
</protein>
<organismHost>
    <name type="scientific">Homo sapiens</name>
    <name type="common">Human</name>
    <dbReference type="NCBI Taxonomy" id="9606"/>
</organismHost>
<organismHost>
    <name type="scientific">Pan troglodytes</name>
    <name type="common">Chimpanzee</name>
    <dbReference type="NCBI Taxonomy" id="9598"/>
</organismHost>
<dbReference type="EC" id="2.7.7.7" evidence="1"/>
<dbReference type="EC" id="2.7.7.49" evidence="1"/>
<dbReference type="EC" id="3.1.26.4" evidence="1"/>
<dbReference type="EMBL" id="V00867">
    <property type="status" value="NOT_ANNOTATED_CDS"/>
    <property type="molecule type" value="Genomic_DNA"/>
</dbReference>
<dbReference type="PIR" id="A00704">
    <property type="entry name" value="JDVLVR"/>
</dbReference>
<dbReference type="GO" id="GO:0003677">
    <property type="term" value="F:DNA binding"/>
    <property type="evidence" value="ECO:0007669"/>
    <property type="project" value="UniProtKB-UniRule"/>
</dbReference>
<dbReference type="GO" id="GO:0003887">
    <property type="term" value="F:DNA-directed DNA polymerase activity"/>
    <property type="evidence" value="ECO:0007669"/>
    <property type="project" value="UniProtKB-UniRule"/>
</dbReference>
<dbReference type="GO" id="GO:0046872">
    <property type="term" value="F:metal ion binding"/>
    <property type="evidence" value="ECO:0007669"/>
    <property type="project" value="UniProtKB-UniRule"/>
</dbReference>
<dbReference type="GO" id="GO:0003964">
    <property type="term" value="F:RNA-directed DNA polymerase activity"/>
    <property type="evidence" value="ECO:0007669"/>
    <property type="project" value="UniProtKB-UniRule"/>
</dbReference>
<dbReference type="GO" id="GO:0004523">
    <property type="term" value="F:RNA-DNA hybrid ribonuclease activity"/>
    <property type="evidence" value="ECO:0007669"/>
    <property type="project" value="UniProtKB-UniRule"/>
</dbReference>
<dbReference type="GO" id="GO:0006260">
    <property type="term" value="P:DNA replication"/>
    <property type="evidence" value="ECO:0007669"/>
    <property type="project" value="UniProtKB-UniRule"/>
</dbReference>
<dbReference type="GO" id="GO:0052170">
    <property type="term" value="P:symbiont-mediated suppression of host innate immune response"/>
    <property type="evidence" value="ECO:0007669"/>
    <property type="project" value="UniProtKB-UniRule"/>
</dbReference>
<dbReference type="FunFam" id="3.30.70.270:FF:000009">
    <property type="entry name" value="Protein P"/>
    <property type="match status" value="1"/>
</dbReference>
<dbReference type="Gene3D" id="3.30.70.270">
    <property type="match status" value="1"/>
</dbReference>
<dbReference type="HAMAP" id="MF_04073">
    <property type="entry name" value="HBV_DPOL"/>
    <property type="match status" value="1"/>
</dbReference>
<dbReference type="InterPro" id="IPR043502">
    <property type="entry name" value="DNA/RNA_pol_sf"/>
</dbReference>
<dbReference type="InterPro" id="IPR001462">
    <property type="entry name" value="DNApol_viral_C"/>
</dbReference>
<dbReference type="InterPro" id="IPR000201">
    <property type="entry name" value="DNApol_viral_N"/>
</dbReference>
<dbReference type="InterPro" id="IPR037531">
    <property type="entry name" value="HBV_DPOL"/>
</dbReference>
<dbReference type="InterPro" id="IPR043128">
    <property type="entry name" value="Rev_trsase/Diguanyl_cyclase"/>
</dbReference>
<dbReference type="InterPro" id="IPR000477">
    <property type="entry name" value="RT_dom"/>
</dbReference>
<dbReference type="InterPro" id="IPR051320">
    <property type="entry name" value="Viral_Replic_Matur_Polypro"/>
</dbReference>
<dbReference type="PANTHER" id="PTHR33064:SF29">
    <property type="entry name" value="PEPTIDASE A2 DOMAIN-CONTAINING PROTEIN-RELATED"/>
    <property type="match status" value="1"/>
</dbReference>
<dbReference type="PANTHER" id="PTHR33064">
    <property type="entry name" value="POL PROTEIN"/>
    <property type="match status" value="1"/>
</dbReference>
<dbReference type="Pfam" id="PF00336">
    <property type="entry name" value="DNA_pol_viral_C"/>
    <property type="match status" value="1"/>
</dbReference>
<dbReference type="Pfam" id="PF00242">
    <property type="entry name" value="DNA_pol_viral_N"/>
    <property type="match status" value="1"/>
</dbReference>
<dbReference type="Pfam" id="PF00078">
    <property type="entry name" value="RVT_1"/>
    <property type="match status" value="1"/>
</dbReference>
<dbReference type="SUPFAM" id="SSF56672">
    <property type="entry name" value="DNA/RNA polymerases"/>
    <property type="match status" value="1"/>
</dbReference>
<dbReference type="PROSITE" id="PS50878">
    <property type="entry name" value="RT_POL"/>
    <property type="match status" value="1"/>
</dbReference>
<reference key="1">
    <citation type="journal article" date="1983" name="Nucleic Acids Res.">
        <title>The complete nucleotide sequences of the cloned hepatitis B virus DNA; subtype adr and adw.</title>
        <authorList>
            <person name="Ono Y."/>
            <person name="Onda H."/>
            <person name="Sasada R."/>
            <person name="Igarashi K."/>
            <person name="Sugino Y."/>
            <person name="Nishioka K."/>
        </authorList>
    </citation>
    <scope>NUCLEOTIDE SEQUENCE [GENOMIC DNA]</scope>
</reference>
<reference key="2">
    <citation type="journal article" date="2007" name="World J. Gastroenterol.">
        <title>Hepatitis B virus replication.</title>
        <authorList>
            <person name="Beck J."/>
            <person name="Nassal M."/>
        </authorList>
    </citation>
    <scope>REVIEW</scope>
</reference>
<proteinExistence type="inferred from homology"/>
<feature type="chain" id="PRO_0000222337" description="Protein P">
    <location>
        <begin position="1"/>
        <end position="843"/>
    </location>
</feature>
<feature type="domain" description="Reverse transcriptase" evidence="1">
    <location>
        <begin position="357"/>
        <end position="600"/>
    </location>
</feature>
<feature type="region of interest" description="Terminal protein domain (TP)" evidence="1">
    <location>
        <begin position="1"/>
        <end position="177"/>
    </location>
</feature>
<feature type="region of interest" description="Spacer" evidence="1">
    <location>
        <begin position="178"/>
        <end position="346"/>
    </location>
</feature>
<feature type="region of interest" description="Disordered" evidence="2">
    <location>
        <begin position="220"/>
        <end position="273"/>
    </location>
</feature>
<feature type="region of interest" description="Disordered" evidence="2">
    <location>
        <begin position="289"/>
        <end position="316"/>
    </location>
</feature>
<feature type="region of interest" description="Polymerase/reverse transcriptase domain (RT)" evidence="1">
    <location>
        <begin position="347"/>
        <end position="690"/>
    </location>
</feature>
<feature type="compositionally biased region" description="Polar residues" evidence="2">
    <location>
        <begin position="289"/>
        <end position="299"/>
    </location>
</feature>
<feature type="binding site" evidence="1">
    <location>
        <position position="429"/>
    </location>
    <ligand>
        <name>Mg(2+)</name>
        <dbReference type="ChEBI" id="CHEBI:18420"/>
        <note>catalytic</note>
    </ligand>
</feature>
<feature type="binding site" evidence="1">
    <location>
        <position position="551"/>
    </location>
    <ligand>
        <name>Mg(2+)</name>
        <dbReference type="ChEBI" id="CHEBI:18420"/>
        <note>catalytic</note>
    </ligand>
</feature>
<feature type="binding site" evidence="1">
    <location>
        <position position="552"/>
    </location>
    <ligand>
        <name>Mg(2+)</name>
        <dbReference type="ChEBI" id="CHEBI:18420"/>
        <note>catalytic</note>
    </ligand>
</feature>
<feature type="site" description="Priming of reverse-transcription by covalently linking the first nucleotide of the (-)DNA" evidence="1">
    <location>
        <position position="63"/>
    </location>
</feature>
<comment type="function">
    <text evidence="1">Multifunctional enzyme that converts the viral RNA genome into dsDNA in viral cytoplasmic capsids. This enzyme displays a DNA polymerase activity that can copy either DNA or RNA templates, and a ribonuclease H (RNase H) activity that cleaves the RNA strand of RNA-DNA heteroduplexes in a partially processive 3'- to 5'-endonucleasic mode. Neo-synthesized pregenomic RNA (pgRNA) are encapsidated together with the P protein, and reverse-transcribed inside the nucleocapsid. Initiation of reverse-transcription occurs first by binding the epsilon loop on the pgRNA genome, and is initiated by protein priming, thereby the 5'-end of (-)DNA is covalently linked to P protein. Partial (+)DNA is synthesized from the (-)DNA template and generates the relaxed circular DNA (RC-DNA) genome. After budding and infection, the RC-DNA migrates in the nucleus, and is converted into a plasmid-like covalently closed circular DNA (cccDNA). The activity of P protein does not seem to be necessary for cccDNA generation, and is presumably released from (+)DNA by host nuclear DNA repair machinery.</text>
</comment>
<comment type="catalytic activity">
    <reaction evidence="1">
        <text>DNA(n) + a 2'-deoxyribonucleoside 5'-triphosphate = DNA(n+1) + diphosphate</text>
        <dbReference type="Rhea" id="RHEA:22508"/>
        <dbReference type="Rhea" id="RHEA-COMP:17339"/>
        <dbReference type="Rhea" id="RHEA-COMP:17340"/>
        <dbReference type="ChEBI" id="CHEBI:33019"/>
        <dbReference type="ChEBI" id="CHEBI:61560"/>
        <dbReference type="ChEBI" id="CHEBI:173112"/>
        <dbReference type="EC" id="2.7.7.7"/>
    </reaction>
</comment>
<comment type="catalytic activity">
    <reaction evidence="1">
        <text>DNA(n) + a 2'-deoxyribonucleoside 5'-triphosphate = DNA(n+1) + diphosphate</text>
        <dbReference type="Rhea" id="RHEA:22508"/>
        <dbReference type="Rhea" id="RHEA-COMP:17339"/>
        <dbReference type="Rhea" id="RHEA-COMP:17340"/>
        <dbReference type="ChEBI" id="CHEBI:33019"/>
        <dbReference type="ChEBI" id="CHEBI:61560"/>
        <dbReference type="ChEBI" id="CHEBI:173112"/>
        <dbReference type="EC" id="2.7.7.49"/>
    </reaction>
</comment>
<comment type="catalytic activity">
    <reaction evidence="1">
        <text>Endonucleolytic cleavage to 5'-phosphomonoester.</text>
        <dbReference type="EC" id="3.1.26.4"/>
    </reaction>
</comment>
<comment type="activity regulation">
    <text evidence="1">Activated by host HSP70 and HSP40 in vitro to be able to bind the epsilon loop of the pgRNA. Because deletion of the RNase H region renders the protein partly chaperone-independent, the chaperones may be needed indirectly to relieve occlusion of the RNA-binding site by this domain. Inhibited by several reverse-transcriptase inhibitors: Lamivudine, Adefovir and Entecavir.</text>
</comment>
<comment type="domain">
    <text evidence="1">Terminal protein domain (TP) is hepadnavirus-specific. Spacer domain is highly variable and separates the TP and RT domains. Polymerase/reverse-transcriptase domain (RT) and ribonuclease H domain (RH) are similar to retrovirus reverse transcriptase/RNase H.</text>
</comment>
<comment type="domain">
    <text evidence="1">The polymerase/reverse transcriptase (RT) and ribonuclease H (RH) domains are structured in five subdomains: finger, palm, thumb, connection and RNase H. Within the palm subdomain, the 'primer grip' region is thought to be involved in the positioning of the primer terminus for accommodating the incoming nucleotide. The RH domain stabilizes the association of RT with primer-template.</text>
</comment>
<comment type="miscellaneous">
    <text evidence="1">Hepadnaviral virions contain probably just one P protein molecule per particle.</text>
</comment>
<comment type="similarity">
    <text evidence="1">Belongs to the hepadnaviridae P protein family.</text>
</comment>
<accession>P03157</accession>
<evidence type="ECO:0000255" key="1">
    <source>
        <dbReference type="HAMAP-Rule" id="MF_04073"/>
    </source>
</evidence>
<evidence type="ECO:0000256" key="2">
    <source>
        <dbReference type="SAM" id="MobiDB-lite"/>
    </source>
</evidence>
<name>DPOL_HBVC5</name>